<evidence type="ECO:0000255" key="1">
    <source>
        <dbReference type="HAMAP-Rule" id="MF_00116"/>
    </source>
</evidence>
<feature type="chain" id="PRO_1000076073" description="Deoxyuridine 5'-triphosphate nucleotidohydrolase">
    <location>
        <begin position="1"/>
        <end position="152"/>
    </location>
</feature>
<feature type="binding site" evidence="1">
    <location>
        <begin position="71"/>
        <end position="73"/>
    </location>
    <ligand>
        <name>substrate</name>
    </ligand>
</feature>
<feature type="binding site" evidence="1">
    <location>
        <position position="84"/>
    </location>
    <ligand>
        <name>substrate</name>
    </ligand>
</feature>
<feature type="binding site" evidence="1">
    <location>
        <begin position="88"/>
        <end position="90"/>
    </location>
    <ligand>
        <name>substrate</name>
    </ligand>
</feature>
<feature type="binding site" evidence="1">
    <location>
        <position position="98"/>
    </location>
    <ligand>
        <name>substrate</name>
    </ligand>
</feature>
<gene>
    <name evidence="1" type="primary">dut</name>
    <name type="ordered locus">Ssed_0383</name>
</gene>
<organism>
    <name type="scientific">Shewanella sediminis (strain HAW-EB3)</name>
    <dbReference type="NCBI Taxonomy" id="425104"/>
    <lineage>
        <taxon>Bacteria</taxon>
        <taxon>Pseudomonadati</taxon>
        <taxon>Pseudomonadota</taxon>
        <taxon>Gammaproteobacteria</taxon>
        <taxon>Alteromonadales</taxon>
        <taxon>Shewanellaceae</taxon>
        <taxon>Shewanella</taxon>
    </lineage>
</organism>
<protein>
    <recommendedName>
        <fullName evidence="1">Deoxyuridine 5'-triphosphate nucleotidohydrolase</fullName>
        <shortName evidence="1">dUTPase</shortName>
        <ecNumber evidence="1">3.6.1.23</ecNumber>
    </recommendedName>
    <alternativeName>
        <fullName evidence="1">dUTP pyrophosphatase</fullName>
    </alternativeName>
</protein>
<accession>A8FQ73</accession>
<dbReference type="EC" id="3.6.1.23" evidence="1"/>
<dbReference type="EMBL" id="CP000821">
    <property type="protein sequence ID" value="ABV34996.1"/>
    <property type="molecule type" value="Genomic_DNA"/>
</dbReference>
<dbReference type="RefSeq" id="WP_012140734.1">
    <property type="nucleotide sequence ID" value="NC_009831.1"/>
</dbReference>
<dbReference type="SMR" id="A8FQ73"/>
<dbReference type="STRING" id="425104.Ssed_0383"/>
<dbReference type="KEGG" id="sse:Ssed_0383"/>
<dbReference type="eggNOG" id="COG0756">
    <property type="taxonomic scope" value="Bacteria"/>
</dbReference>
<dbReference type="HOGENOM" id="CLU_068508_1_1_6"/>
<dbReference type="OrthoDB" id="9809956at2"/>
<dbReference type="UniPathway" id="UPA00610">
    <property type="reaction ID" value="UER00666"/>
</dbReference>
<dbReference type="Proteomes" id="UP000002015">
    <property type="component" value="Chromosome"/>
</dbReference>
<dbReference type="GO" id="GO:0004170">
    <property type="term" value="F:dUTP diphosphatase activity"/>
    <property type="evidence" value="ECO:0007669"/>
    <property type="project" value="UniProtKB-UniRule"/>
</dbReference>
<dbReference type="GO" id="GO:0000287">
    <property type="term" value="F:magnesium ion binding"/>
    <property type="evidence" value="ECO:0007669"/>
    <property type="project" value="UniProtKB-UniRule"/>
</dbReference>
<dbReference type="GO" id="GO:0006226">
    <property type="term" value="P:dUMP biosynthetic process"/>
    <property type="evidence" value="ECO:0007669"/>
    <property type="project" value="UniProtKB-UniRule"/>
</dbReference>
<dbReference type="GO" id="GO:0046081">
    <property type="term" value="P:dUTP catabolic process"/>
    <property type="evidence" value="ECO:0007669"/>
    <property type="project" value="InterPro"/>
</dbReference>
<dbReference type="CDD" id="cd07557">
    <property type="entry name" value="trimeric_dUTPase"/>
    <property type="match status" value="1"/>
</dbReference>
<dbReference type="FunFam" id="2.70.40.10:FF:000002">
    <property type="entry name" value="dUTP diphosphatase"/>
    <property type="match status" value="1"/>
</dbReference>
<dbReference type="Gene3D" id="2.70.40.10">
    <property type="match status" value="1"/>
</dbReference>
<dbReference type="HAMAP" id="MF_00116">
    <property type="entry name" value="dUTPase_bact"/>
    <property type="match status" value="1"/>
</dbReference>
<dbReference type="InterPro" id="IPR008181">
    <property type="entry name" value="dUTPase"/>
</dbReference>
<dbReference type="InterPro" id="IPR029054">
    <property type="entry name" value="dUTPase-like"/>
</dbReference>
<dbReference type="InterPro" id="IPR036157">
    <property type="entry name" value="dUTPase-like_sf"/>
</dbReference>
<dbReference type="InterPro" id="IPR033704">
    <property type="entry name" value="dUTPase_trimeric"/>
</dbReference>
<dbReference type="NCBIfam" id="TIGR00576">
    <property type="entry name" value="dut"/>
    <property type="match status" value="1"/>
</dbReference>
<dbReference type="NCBIfam" id="NF001862">
    <property type="entry name" value="PRK00601.1"/>
    <property type="match status" value="1"/>
</dbReference>
<dbReference type="PANTHER" id="PTHR11241">
    <property type="entry name" value="DEOXYURIDINE 5'-TRIPHOSPHATE NUCLEOTIDOHYDROLASE"/>
    <property type="match status" value="1"/>
</dbReference>
<dbReference type="PANTHER" id="PTHR11241:SF0">
    <property type="entry name" value="DEOXYURIDINE 5'-TRIPHOSPHATE NUCLEOTIDOHYDROLASE"/>
    <property type="match status" value="1"/>
</dbReference>
<dbReference type="Pfam" id="PF00692">
    <property type="entry name" value="dUTPase"/>
    <property type="match status" value="1"/>
</dbReference>
<dbReference type="SUPFAM" id="SSF51283">
    <property type="entry name" value="dUTPase-like"/>
    <property type="match status" value="1"/>
</dbReference>
<sequence length="152" mass="16098">MKTPIEVKILDSRIGSQFPLPAYATPGSAGMDLRAMLETSIQVAPGETILIPTGISIHVADSSLAAVILPRSGLGHKHGIVLGNLVGLIDSDYQGPLMVSCWNRGSEPFTLEIGDRLAQLVFVPVVQAEFKLVDEFDNSSRGEGGFGHSGTK</sequence>
<name>DUT_SHESH</name>
<proteinExistence type="inferred from homology"/>
<comment type="function">
    <text evidence="1">This enzyme is involved in nucleotide metabolism: it produces dUMP, the immediate precursor of thymidine nucleotides and it decreases the intracellular concentration of dUTP so that uracil cannot be incorporated into DNA.</text>
</comment>
<comment type="catalytic activity">
    <reaction evidence="1">
        <text>dUTP + H2O = dUMP + diphosphate + H(+)</text>
        <dbReference type="Rhea" id="RHEA:10248"/>
        <dbReference type="ChEBI" id="CHEBI:15377"/>
        <dbReference type="ChEBI" id="CHEBI:15378"/>
        <dbReference type="ChEBI" id="CHEBI:33019"/>
        <dbReference type="ChEBI" id="CHEBI:61555"/>
        <dbReference type="ChEBI" id="CHEBI:246422"/>
        <dbReference type="EC" id="3.6.1.23"/>
    </reaction>
</comment>
<comment type="cofactor">
    <cofactor evidence="1">
        <name>Mg(2+)</name>
        <dbReference type="ChEBI" id="CHEBI:18420"/>
    </cofactor>
</comment>
<comment type="pathway">
    <text evidence="1">Pyrimidine metabolism; dUMP biosynthesis; dUMP from dCTP (dUTP route): step 2/2.</text>
</comment>
<comment type="similarity">
    <text evidence="1">Belongs to the dUTPase family.</text>
</comment>
<reference key="1">
    <citation type="submission" date="2007-08" db="EMBL/GenBank/DDBJ databases">
        <title>Complete sequence of Shewanella sediminis HAW-EB3.</title>
        <authorList>
            <consortium name="US DOE Joint Genome Institute"/>
            <person name="Copeland A."/>
            <person name="Lucas S."/>
            <person name="Lapidus A."/>
            <person name="Barry K."/>
            <person name="Glavina del Rio T."/>
            <person name="Dalin E."/>
            <person name="Tice H."/>
            <person name="Pitluck S."/>
            <person name="Chertkov O."/>
            <person name="Brettin T."/>
            <person name="Bruce D."/>
            <person name="Detter J.C."/>
            <person name="Han C."/>
            <person name="Schmutz J."/>
            <person name="Larimer F."/>
            <person name="Land M."/>
            <person name="Hauser L."/>
            <person name="Kyrpides N."/>
            <person name="Kim E."/>
            <person name="Zhao J.-S."/>
            <person name="Richardson P."/>
        </authorList>
    </citation>
    <scope>NUCLEOTIDE SEQUENCE [LARGE SCALE GENOMIC DNA]</scope>
    <source>
        <strain>HAW-EB3</strain>
    </source>
</reference>
<keyword id="KW-0378">Hydrolase</keyword>
<keyword id="KW-0460">Magnesium</keyword>
<keyword id="KW-0479">Metal-binding</keyword>
<keyword id="KW-0546">Nucleotide metabolism</keyword>
<keyword id="KW-1185">Reference proteome</keyword>